<dbReference type="EMBL" id="AB186034">
    <property type="protein sequence ID" value="BAD89087.1"/>
    <property type="molecule type" value="mRNA"/>
</dbReference>
<dbReference type="EMBL" id="AB186038">
    <property type="protein sequence ID" value="BAD89091.1"/>
    <property type="molecule type" value="Genomic_DNA"/>
</dbReference>
<dbReference type="SMR" id="Q5H7N5"/>
<dbReference type="GO" id="GO:0005576">
    <property type="term" value="C:extracellular region"/>
    <property type="evidence" value="ECO:0000250"/>
    <property type="project" value="UniProtKB"/>
</dbReference>
<dbReference type="GO" id="GO:0002776">
    <property type="term" value="P:antimicrobial peptide secretion"/>
    <property type="evidence" value="ECO:0000314"/>
    <property type="project" value="UniProtKB"/>
</dbReference>
<dbReference type="GO" id="GO:0042742">
    <property type="term" value="P:defense response to bacterium"/>
    <property type="evidence" value="ECO:0000270"/>
    <property type="project" value="UniProtKB"/>
</dbReference>
<dbReference type="PROSITE" id="PS00268">
    <property type="entry name" value="CECROPIN"/>
    <property type="match status" value="1"/>
</dbReference>
<reference key="1">
    <citation type="journal article" date="2005" name="Biochem. J.">
        <title>Cecropin P1 and novel nematode cecropins: a bacteria-inducible antimicrobial peptide family in the nematode Ascaris suum.</title>
        <authorList>
            <person name="Pillai A."/>
            <person name="Ueno S."/>
            <person name="Zhang H."/>
            <person name="Lee J.M."/>
            <person name="Kato Y."/>
        </authorList>
    </citation>
    <scope>NUCLEOTIDE SEQUENCE [GENOMIC DNA / MRNA]</scope>
    <scope>FUNCTION</scope>
    <scope>TISSUE SPECIFICITY</scope>
    <scope>INDUCTION</scope>
</reference>
<organism>
    <name type="scientific">Ascaris suum</name>
    <name type="common">Pig roundworm</name>
    <name type="synonym">Ascaris lumbricoides</name>
    <dbReference type="NCBI Taxonomy" id="6253"/>
    <lineage>
        <taxon>Eukaryota</taxon>
        <taxon>Metazoa</taxon>
        <taxon>Ecdysozoa</taxon>
        <taxon>Nematoda</taxon>
        <taxon>Chromadorea</taxon>
        <taxon>Rhabditida</taxon>
        <taxon>Spirurina</taxon>
        <taxon>Ascaridomorpha</taxon>
        <taxon>Ascaridoidea</taxon>
        <taxon>Ascarididae</taxon>
        <taxon>Ascaris</taxon>
    </lineage>
</organism>
<sequence length="74" mass="8381">MFLIYLLVQTAESSWLSKTAKKLENSAKKRISEGIAIAIKGGSRRRRSVGEEDAIPSHIEVNKFFLRKPAKEHI</sequence>
<comment type="function">
    <text evidence="2">Has antibacterial activity against several Gram-positive and Gram-negative bacteria. Is weakly active against yeasts. Acts by a nonpore mechanism.</text>
</comment>
<comment type="subcellular location">
    <subcellularLocation>
        <location evidence="1">Secreted</location>
    </subcellularLocation>
</comment>
<comment type="tissue specificity">
    <text evidence="2">Expressed in the body wall, intestine, uterus and ovary.</text>
</comment>
<comment type="induction">
    <text evidence="2">By bacterial infection.</text>
</comment>
<comment type="similarity">
    <text evidence="3">Belongs to the cecropin family.</text>
</comment>
<gene>
    <name type="primary">ASCEC-3</name>
</gene>
<feature type="signal peptide" evidence="1">
    <location>
        <begin position="1"/>
        <end position="13"/>
    </location>
</feature>
<feature type="chain" id="PRO_0000397967" description="Cecropin-P3">
    <location>
        <begin position="14"/>
        <end position="44"/>
    </location>
</feature>
<feature type="propeptide" id="PRO_0000397968" description="Removed in mature form" evidence="1">
    <location>
        <begin position="45"/>
        <end position="74"/>
    </location>
</feature>
<name>CECP3_ASCSU</name>
<evidence type="ECO:0000250" key="1"/>
<evidence type="ECO:0000269" key="2">
    <source>
    </source>
</evidence>
<evidence type="ECO:0000305" key="3"/>
<proteinExistence type="evidence at transcript level"/>
<accession>Q5H7N5</accession>
<keyword id="KW-0044">Antibiotic</keyword>
<keyword id="KW-0929">Antimicrobial</keyword>
<keyword id="KW-0964">Secreted</keyword>
<keyword id="KW-0732">Signal</keyword>
<protein>
    <recommendedName>
        <fullName>Cecropin-P3</fullName>
    </recommendedName>
</protein>